<dbReference type="EC" id="2.7.11.33" evidence="1"/>
<dbReference type="EC" id="2.7.4.28" evidence="1"/>
<dbReference type="EMBL" id="CU928164">
    <property type="protein sequence ID" value="CAR17484.1"/>
    <property type="molecule type" value="Genomic_DNA"/>
</dbReference>
<dbReference type="RefSeq" id="WP_000368054.1">
    <property type="nucleotide sequence ID" value="NC_011750.1"/>
</dbReference>
<dbReference type="RefSeq" id="YP_002407358.1">
    <property type="nucleotide sequence ID" value="NC_011750.1"/>
</dbReference>
<dbReference type="SMR" id="B7NTS8"/>
<dbReference type="STRING" id="585057.ECIAI39_1350"/>
<dbReference type="KEGG" id="ect:ECIAI39_1350"/>
<dbReference type="PATRIC" id="fig|585057.6.peg.1412"/>
<dbReference type="HOGENOM" id="CLU_046206_1_0_6"/>
<dbReference type="Proteomes" id="UP000000749">
    <property type="component" value="Chromosome"/>
</dbReference>
<dbReference type="GO" id="GO:0043531">
    <property type="term" value="F:ADP binding"/>
    <property type="evidence" value="ECO:0007669"/>
    <property type="project" value="UniProtKB-UniRule"/>
</dbReference>
<dbReference type="GO" id="GO:0005524">
    <property type="term" value="F:ATP binding"/>
    <property type="evidence" value="ECO:0007669"/>
    <property type="project" value="InterPro"/>
</dbReference>
<dbReference type="GO" id="GO:0016776">
    <property type="term" value="F:phosphotransferase activity, phosphate group as acceptor"/>
    <property type="evidence" value="ECO:0007669"/>
    <property type="project" value="UniProtKB-UniRule"/>
</dbReference>
<dbReference type="GO" id="GO:0004674">
    <property type="term" value="F:protein serine/threonine kinase activity"/>
    <property type="evidence" value="ECO:0007669"/>
    <property type="project" value="UniProtKB-UniRule"/>
</dbReference>
<dbReference type="HAMAP" id="MF_01062">
    <property type="entry name" value="PSRP"/>
    <property type="match status" value="1"/>
</dbReference>
<dbReference type="InterPro" id="IPR005177">
    <property type="entry name" value="Kinase-pyrophosphorylase"/>
</dbReference>
<dbReference type="InterPro" id="IPR026530">
    <property type="entry name" value="PSRP"/>
</dbReference>
<dbReference type="NCBIfam" id="NF003742">
    <property type="entry name" value="PRK05339.1"/>
    <property type="match status" value="1"/>
</dbReference>
<dbReference type="PANTHER" id="PTHR31756">
    <property type="entry name" value="PYRUVATE, PHOSPHATE DIKINASE REGULATORY PROTEIN 1, CHLOROPLASTIC"/>
    <property type="match status" value="1"/>
</dbReference>
<dbReference type="PANTHER" id="PTHR31756:SF3">
    <property type="entry name" value="PYRUVATE, PHOSPHATE DIKINASE REGULATORY PROTEIN 1, CHLOROPLASTIC"/>
    <property type="match status" value="1"/>
</dbReference>
<dbReference type="Pfam" id="PF03618">
    <property type="entry name" value="Kinase-PPPase"/>
    <property type="match status" value="1"/>
</dbReference>
<accession>B7NTS8</accession>
<keyword id="KW-0418">Kinase</keyword>
<keyword id="KW-0547">Nucleotide-binding</keyword>
<keyword id="KW-0723">Serine/threonine-protein kinase</keyword>
<keyword id="KW-0808">Transferase</keyword>
<protein>
    <recommendedName>
        <fullName evidence="1">Phosphoenolpyruvate synthase regulatory protein</fullName>
        <shortName evidence="1">PEP synthase regulatory protein</shortName>
        <shortName evidence="1">PSRP</shortName>
        <ecNumber evidence="1">2.7.11.33</ecNumber>
        <ecNumber evidence="1">2.7.4.28</ecNumber>
    </recommendedName>
    <alternativeName>
        <fullName evidence="1">Pyruvate, water dikinase regulatory protein</fullName>
    </alternativeName>
</protein>
<evidence type="ECO:0000255" key="1">
    <source>
        <dbReference type="HAMAP-Rule" id="MF_01062"/>
    </source>
</evidence>
<sequence>MDNAVDRHVFYISDGTAITAEVLGHAVMSQFPVTISSITLPFVENESRARAVKDQIDAIYHQTGVRPLVFYSIVLPEIRAIILQSEGFCQDIVQALVAPLQQEMQLDPTPIAHRTHGLNPNNLNKYDARIAAIDYTLAHDDGISLRNLDQAQVILLGVSRCGKTPTSLYLAMQFGIRAANYPFIADDMDNLVLPASLKPLQHKLFGLTIDPERLAAIREERRENSRYASLRQCRMEVAEVEALYRKNQIPWINSTNYSVEEIATKILDIMGLSRRMY</sequence>
<feature type="chain" id="PRO_1000136468" description="Phosphoenolpyruvate synthase regulatory protein">
    <location>
        <begin position="1"/>
        <end position="277"/>
    </location>
</feature>
<feature type="binding site" evidence="1">
    <location>
        <begin position="157"/>
        <end position="164"/>
    </location>
    <ligand>
        <name>ADP</name>
        <dbReference type="ChEBI" id="CHEBI:456216"/>
    </ligand>
</feature>
<gene>
    <name evidence="1" type="primary">ppsR</name>
    <name type="ordered locus">ECIAI39_1350</name>
</gene>
<proteinExistence type="inferred from homology"/>
<name>PSRP_ECO7I</name>
<reference key="1">
    <citation type="journal article" date="2009" name="PLoS Genet.">
        <title>Organised genome dynamics in the Escherichia coli species results in highly diverse adaptive paths.</title>
        <authorList>
            <person name="Touchon M."/>
            <person name="Hoede C."/>
            <person name="Tenaillon O."/>
            <person name="Barbe V."/>
            <person name="Baeriswyl S."/>
            <person name="Bidet P."/>
            <person name="Bingen E."/>
            <person name="Bonacorsi S."/>
            <person name="Bouchier C."/>
            <person name="Bouvet O."/>
            <person name="Calteau A."/>
            <person name="Chiapello H."/>
            <person name="Clermont O."/>
            <person name="Cruveiller S."/>
            <person name="Danchin A."/>
            <person name="Diard M."/>
            <person name="Dossat C."/>
            <person name="Karoui M.E."/>
            <person name="Frapy E."/>
            <person name="Garry L."/>
            <person name="Ghigo J.M."/>
            <person name="Gilles A.M."/>
            <person name="Johnson J."/>
            <person name="Le Bouguenec C."/>
            <person name="Lescat M."/>
            <person name="Mangenot S."/>
            <person name="Martinez-Jehanne V."/>
            <person name="Matic I."/>
            <person name="Nassif X."/>
            <person name="Oztas S."/>
            <person name="Petit M.A."/>
            <person name="Pichon C."/>
            <person name="Rouy Z."/>
            <person name="Ruf C.S."/>
            <person name="Schneider D."/>
            <person name="Tourret J."/>
            <person name="Vacherie B."/>
            <person name="Vallenet D."/>
            <person name="Medigue C."/>
            <person name="Rocha E.P.C."/>
            <person name="Denamur E."/>
        </authorList>
    </citation>
    <scope>NUCLEOTIDE SEQUENCE [LARGE SCALE GENOMIC DNA]</scope>
    <source>
        <strain>IAI39 / ExPEC</strain>
    </source>
</reference>
<comment type="function">
    <text evidence="1">Bifunctional serine/threonine kinase and phosphorylase involved in the regulation of the phosphoenolpyruvate synthase (PEPS) by catalyzing its phosphorylation/dephosphorylation.</text>
</comment>
<comment type="catalytic activity">
    <reaction evidence="1">
        <text>[pyruvate, water dikinase] + ADP = [pyruvate, water dikinase]-phosphate + AMP + H(+)</text>
        <dbReference type="Rhea" id="RHEA:46020"/>
        <dbReference type="Rhea" id="RHEA-COMP:11425"/>
        <dbReference type="Rhea" id="RHEA-COMP:11426"/>
        <dbReference type="ChEBI" id="CHEBI:15378"/>
        <dbReference type="ChEBI" id="CHEBI:43176"/>
        <dbReference type="ChEBI" id="CHEBI:68546"/>
        <dbReference type="ChEBI" id="CHEBI:456215"/>
        <dbReference type="ChEBI" id="CHEBI:456216"/>
        <dbReference type="EC" id="2.7.11.33"/>
    </reaction>
</comment>
<comment type="catalytic activity">
    <reaction evidence="1">
        <text>[pyruvate, water dikinase]-phosphate + phosphate + H(+) = [pyruvate, water dikinase] + diphosphate</text>
        <dbReference type="Rhea" id="RHEA:48580"/>
        <dbReference type="Rhea" id="RHEA-COMP:11425"/>
        <dbReference type="Rhea" id="RHEA-COMP:11426"/>
        <dbReference type="ChEBI" id="CHEBI:15378"/>
        <dbReference type="ChEBI" id="CHEBI:33019"/>
        <dbReference type="ChEBI" id="CHEBI:43176"/>
        <dbReference type="ChEBI" id="CHEBI:43474"/>
        <dbReference type="ChEBI" id="CHEBI:68546"/>
        <dbReference type="EC" id="2.7.4.28"/>
    </reaction>
</comment>
<comment type="similarity">
    <text evidence="1">Belongs to the pyruvate, phosphate/water dikinase regulatory protein family. PSRP subfamily.</text>
</comment>
<organism>
    <name type="scientific">Escherichia coli O7:K1 (strain IAI39 / ExPEC)</name>
    <dbReference type="NCBI Taxonomy" id="585057"/>
    <lineage>
        <taxon>Bacteria</taxon>
        <taxon>Pseudomonadati</taxon>
        <taxon>Pseudomonadota</taxon>
        <taxon>Gammaproteobacteria</taxon>
        <taxon>Enterobacterales</taxon>
        <taxon>Enterobacteriaceae</taxon>
        <taxon>Escherichia</taxon>
    </lineage>
</organism>